<sequence>MIAMNTPDFQRMKKDNKKISMVTCYDYWSACIISQSNVDCILVGDSLAMVMYGHSTTLPATVEIMAQHIQAVSRGAPNKFIIGDMPFCSYRKDLTTSMNAVERLMQAGAQAIKLEGADAHNLKFIHHVVKSGIPVIGHLGLTPQSIYTLGGFKVQGKEPSAAKKLMADAKALAETGCFAVVLECVPSELAELITNSISIPTIGIGAGPATSGQVLVLQDLLGTNNQFQPKYLKKFLNGFELIKKALDDFDQEVKTSTYPHLETHCY</sequence>
<reference key="1">
    <citation type="journal article" date="2009" name="Infect. Immun.">
        <title>Comparative genomics reveal extensive transposon-mediated genomic plasticity and diversity among potential effector proteins within the genus Coxiella.</title>
        <authorList>
            <person name="Beare P.A."/>
            <person name="Unsworth N."/>
            <person name="Andoh M."/>
            <person name="Voth D.E."/>
            <person name="Omsland A."/>
            <person name="Gilk S.D."/>
            <person name="Williams K.P."/>
            <person name="Sobral B.W."/>
            <person name="Kupko J.J. III"/>
            <person name="Porcella S.F."/>
            <person name="Samuel J.E."/>
            <person name="Heinzen R.A."/>
        </authorList>
    </citation>
    <scope>NUCLEOTIDE SEQUENCE [LARGE SCALE GENOMIC DNA]</scope>
    <source>
        <strain>CbuK_Q154</strain>
    </source>
</reference>
<comment type="function">
    <text evidence="1">Catalyzes the reversible reaction in which hydroxymethyl group from 5,10-methylenetetrahydrofolate is transferred onto alpha-ketoisovalerate to form ketopantoate.</text>
</comment>
<comment type="catalytic activity">
    <reaction evidence="1">
        <text>3-methyl-2-oxobutanoate + (6R)-5,10-methylene-5,6,7,8-tetrahydrofolate + H2O = 2-dehydropantoate + (6S)-5,6,7,8-tetrahydrofolate</text>
        <dbReference type="Rhea" id="RHEA:11824"/>
        <dbReference type="ChEBI" id="CHEBI:11561"/>
        <dbReference type="ChEBI" id="CHEBI:11851"/>
        <dbReference type="ChEBI" id="CHEBI:15377"/>
        <dbReference type="ChEBI" id="CHEBI:15636"/>
        <dbReference type="ChEBI" id="CHEBI:57453"/>
        <dbReference type="EC" id="2.1.2.11"/>
    </reaction>
</comment>
<comment type="cofactor">
    <cofactor evidence="1">
        <name>Mg(2+)</name>
        <dbReference type="ChEBI" id="CHEBI:18420"/>
    </cofactor>
    <text evidence="1">Binds 1 Mg(2+) ion per subunit.</text>
</comment>
<comment type="pathway">
    <text evidence="1">Cofactor biosynthesis; (R)-pantothenate biosynthesis; (R)-pantoate from 3-methyl-2-oxobutanoate: step 1/2.</text>
</comment>
<comment type="subunit">
    <text evidence="1">Homodecamer; pentamer of dimers.</text>
</comment>
<comment type="subcellular location">
    <subcellularLocation>
        <location evidence="1">Cytoplasm</location>
    </subcellularLocation>
</comment>
<comment type="similarity">
    <text evidence="1">Belongs to the PanB family.</text>
</comment>
<accession>B6J9H8</accession>
<name>PANB_COXB1</name>
<gene>
    <name evidence="1" type="primary">panB</name>
    <name type="ordered locus">CbuK_1644</name>
</gene>
<evidence type="ECO:0000255" key="1">
    <source>
        <dbReference type="HAMAP-Rule" id="MF_00156"/>
    </source>
</evidence>
<dbReference type="EC" id="2.1.2.11" evidence="1"/>
<dbReference type="EMBL" id="CP001020">
    <property type="protein sequence ID" value="ACJ20792.1"/>
    <property type="molecule type" value="Genomic_DNA"/>
</dbReference>
<dbReference type="RefSeq" id="WP_012570863.1">
    <property type="nucleotide sequence ID" value="NC_011528.1"/>
</dbReference>
<dbReference type="SMR" id="B6J9H8"/>
<dbReference type="KEGG" id="cbc:CbuK_1644"/>
<dbReference type="HOGENOM" id="CLU_036645_1_0_6"/>
<dbReference type="UniPathway" id="UPA00028">
    <property type="reaction ID" value="UER00003"/>
</dbReference>
<dbReference type="GO" id="GO:0005737">
    <property type="term" value="C:cytoplasm"/>
    <property type="evidence" value="ECO:0007669"/>
    <property type="project" value="UniProtKB-SubCell"/>
</dbReference>
<dbReference type="GO" id="GO:0003864">
    <property type="term" value="F:3-methyl-2-oxobutanoate hydroxymethyltransferase activity"/>
    <property type="evidence" value="ECO:0007669"/>
    <property type="project" value="UniProtKB-UniRule"/>
</dbReference>
<dbReference type="GO" id="GO:0000287">
    <property type="term" value="F:magnesium ion binding"/>
    <property type="evidence" value="ECO:0007669"/>
    <property type="project" value="TreeGrafter"/>
</dbReference>
<dbReference type="GO" id="GO:0015940">
    <property type="term" value="P:pantothenate biosynthetic process"/>
    <property type="evidence" value="ECO:0007669"/>
    <property type="project" value="UniProtKB-UniRule"/>
</dbReference>
<dbReference type="CDD" id="cd06557">
    <property type="entry name" value="KPHMT-like"/>
    <property type="match status" value="1"/>
</dbReference>
<dbReference type="FunFam" id="3.20.20.60:FF:000003">
    <property type="entry name" value="3-methyl-2-oxobutanoate hydroxymethyltransferase"/>
    <property type="match status" value="1"/>
</dbReference>
<dbReference type="Gene3D" id="3.20.20.60">
    <property type="entry name" value="Phosphoenolpyruvate-binding domains"/>
    <property type="match status" value="1"/>
</dbReference>
<dbReference type="HAMAP" id="MF_00156">
    <property type="entry name" value="PanB"/>
    <property type="match status" value="1"/>
</dbReference>
<dbReference type="InterPro" id="IPR003700">
    <property type="entry name" value="Pantoate_hydroxy_MeTrfase"/>
</dbReference>
<dbReference type="InterPro" id="IPR015813">
    <property type="entry name" value="Pyrv/PenolPyrv_kinase-like_dom"/>
</dbReference>
<dbReference type="InterPro" id="IPR040442">
    <property type="entry name" value="Pyrv_kinase-like_dom_sf"/>
</dbReference>
<dbReference type="NCBIfam" id="TIGR00222">
    <property type="entry name" value="panB"/>
    <property type="match status" value="1"/>
</dbReference>
<dbReference type="NCBIfam" id="NF001452">
    <property type="entry name" value="PRK00311.1"/>
    <property type="match status" value="1"/>
</dbReference>
<dbReference type="PANTHER" id="PTHR20881">
    <property type="entry name" value="3-METHYL-2-OXOBUTANOATE HYDROXYMETHYLTRANSFERASE"/>
    <property type="match status" value="1"/>
</dbReference>
<dbReference type="PANTHER" id="PTHR20881:SF0">
    <property type="entry name" value="3-METHYL-2-OXOBUTANOATE HYDROXYMETHYLTRANSFERASE"/>
    <property type="match status" value="1"/>
</dbReference>
<dbReference type="Pfam" id="PF02548">
    <property type="entry name" value="Pantoate_transf"/>
    <property type="match status" value="1"/>
</dbReference>
<dbReference type="PIRSF" id="PIRSF000388">
    <property type="entry name" value="Pantoate_hydroxy_MeTrfase"/>
    <property type="match status" value="1"/>
</dbReference>
<dbReference type="SUPFAM" id="SSF51621">
    <property type="entry name" value="Phosphoenolpyruvate/pyruvate domain"/>
    <property type="match status" value="1"/>
</dbReference>
<proteinExistence type="inferred from homology"/>
<feature type="chain" id="PRO_1000096956" description="3-methyl-2-oxobutanoate hydroxymethyltransferase">
    <location>
        <begin position="1"/>
        <end position="266"/>
    </location>
</feature>
<feature type="active site" description="Proton acceptor" evidence="1">
    <location>
        <position position="183"/>
    </location>
</feature>
<feature type="binding site" evidence="1">
    <location>
        <begin position="45"/>
        <end position="46"/>
    </location>
    <ligand>
        <name>3-methyl-2-oxobutanoate</name>
        <dbReference type="ChEBI" id="CHEBI:11851"/>
    </ligand>
</feature>
<feature type="binding site" evidence="1">
    <location>
        <position position="45"/>
    </location>
    <ligand>
        <name>Mg(2+)</name>
        <dbReference type="ChEBI" id="CHEBI:18420"/>
    </ligand>
</feature>
<feature type="binding site" evidence="1">
    <location>
        <position position="84"/>
    </location>
    <ligand>
        <name>3-methyl-2-oxobutanoate</name>
        <dbReference type="ChEBI" id="CHEBI:11851"/>
    </ligand>
</feature>
<feature type="binding site" evidence="1">
    <location>
        <position position="84"/>
    </location>
    <ligand>
        <name>Mg(2+)</name>
        <dbReference type="ChEBI" id="CHEBI:18420"/>
    </ligand>
</feature>
<feature type="binding site" evidence="1">
    <location>
        <position position="113"/>
    </location>
    <ligand>
        <name>3-methyl-2-oxobutanoate</name>
        <dbReference type="ChEBI" id="CHEBI:11851"/>
    </ligand>
</feature>
<feature type="binding site" evidence="1">
    <location>
        <position position="115"/>
    </location>
    <ligand>
        <name>Mg(2+)</name>
        <dbReference type="ChEBI" id="CHEBI:18420"/>
    </ligand>
</feature>
<keyword id="KW-0963">Cytoplasm</keyword>
<keyword id="KW-0460">Magnesium</keyword>
<keyword id="KW-0479">Metal-binding</keyword>
<keyword id="KW-0566">Pantothenate biosynthesis</keyword>
<keyword id="KW-0808">Transferase</keyword>
<protein>
    <recommendedName>
        <fullName evidence="1">3-methyl-2-oxobutanoate hydroxymethyltransferase</fullName>
        <ecNumber evidence="1">2.1.2.11</ecNumber>
    </recommendedName>
    <alternativeName>
        <fullName evidence="1">Ketopantoate hydroxymethyltransferase</fullName>
        <shortName evidence="1">KPHMT</shortName>
    </alternativeName>
</protein>
<organism>
    <name type="scientific">Coxiella burnetii (strain CbuK_Q154)</name>
    <name type="common">Coxiella burnetii (strain Q154)</name>
    <dbReference type="NCBI Taxonomy" id="434924"/>
    <lineage>
        <taxon>Bacteria</taxon>
        <taxon>Pseudomonadati</taxon>
        <taxon>Pseudomonadota</taxon>
        <taxon>Gammaproteobacteria</taxon>
        <taxon>Legionellales</taxon>
        <taxon>Coxiellaceae</taxon>
        <taxon>Coxiella</taxon>
    </lineage>
</organism>